<keyword id="KW-0150">Chloroplast</keyword>
<keyword id="KW-0934">Plastid</keyword>
<protein>
    <recommendedName>
        <fullName>Uncharacterized 30.4 kDa protein in rpoZ-ycf20 intergenic region</fullName>
    </recommendedName>
</protein>
<dbReference type="EMBL" id="AF166114">
    <property type="protein sequence ID" value="AAF43882.1"/>
    <property type="molecule type" value="Genomic_DNA"/>
</dbReference>
<dbReference type="RefSeq" id="NP_038444.1">
    <property type="nucleotide sequence ID" value="NC_002186.1"/>
</dbReference>
<dbReference type="GeneID" id="1403687"/>
<dbReference type="GO" id="GO:0009507">
    <property type="term" value="C:chloroplast"/>
    <property type="evidence" value="ECO:0007669"/>
    <property type="project" value="UniProtKB-SubCell"/>
</dbReference>
<name>YCX3_MESVI</name>
<comment type="subcellular location">
    <subcellularLocation>
        <location>Plastid</location>
        <location>Chloroplast</location>
    </subcellularLocation>
</comment>
<feature type="chain" id="PRO_0000217449" description="Uncharacterized 30.4 kDa protein in rpoZ-ycf20 intergenic region">
    <location>
        <begin position="1"/>
        <end position="261"/>
    </location>
</feature>
<reference key="1">
    <citation type="journal article" date="2000" name="Nature">
        <title>Ancestral chloroplast genome in Mesostigma viride reveals an early branch of green plant evolution.</title>
        <authorList>
            <person name="Lemieux C."/>
            <person name="Otis C."/>
            <person name="Turmel M."/>
        </authorList>
    </citation>
    <scope>NUCLEOTIDE SEQUENCE [LARGE SCALE GENOMIC DNA]</scope>
    <source>
        <strain>NIES-296 / KY-14 / CCMP 2046</strain>
    </source>
</reference>
<sequence>MYFHILILNHTLMKKKSYSTYNLTIWQHIWTIILLFISISCIKQYNFSFQSFNRGEYSNFTTFDSFNKKQVCNLISFDNALLKILLKNKICINTIEKQPIYKQIQICPDFCRLIFTSHSYNPIGIINNVSDLSIIGFVDLYGNKWEEGSAFIAHKYFLENQKLPNIIGINNMNSYKLAQMCFVLKNNKSTHSFVIDLRKEKNIILINNLGKVNIGNDFASLIKKLIFLKSFTSICKEGDDILSKIDINNLSRPIVQYSSYL</sequence>
<geneLocation type="chloroplast"/>
<proteinExistence type="predicted"/>
<organism>
    <name type="scientific">Mesostigma viride</name>
    <name type="common">Green alga</name>
    <dbReference type="NCBI Taxonomy" id="41882"/>
    <lineage>
        <taxon>Eukaryota</taxon>
        <taxon>Viridiplantae</taxon>
        <taxon>Streptophyta</taxon>
        <taxon>Mesostigmatophyceae</taxon>
        <taxon>Mesostigmatales</taxon>
        <taxon>Mesostigmataceae</taxon>
        <taxon>Mesostigma</taxon>
    </lineage>
</organism>
<accession>Q9MUL6</accession>